<proteinExistence type="evidence at transcript level"/>
<evidence type="ECO:0000250" key="1">
    <source>
        <dbReference type="UniProtKB" id="O75063"/>
    </source>
</evidence>
<evidence type="ECO:0000250" key="2">
    <source>
        <dbReference type="UniProtKB" id="Q8IXL6"/>
    </source>
</evidence>
<evidence type="ECO:0000250" key="3">
    <source>
        <dbReference type="UniProtKB" id="Q9XTW2"/>
    </source>
</evidence>
<evidence type="ECO:0000255" key="4"/>
<evidence type="ECO:0000255" key="5">
    <source>
        <dbReference type="PROSITE-ProRule" id="PRU00498"/>
    </source>
</evidence>
<evidence type="ECO:0000269" key="6">
    <source>
    </source>
</evidence>
<evidence type="ECO:0000305" key="7"/>
<evidence type="ECO:0000312" key="8">
    <source>
        <dbReference type="FlyBase" id="FBgn0038268"/>
    </source>
</evidence>
<sequence>MNKRSVIIAGIVASLLGLALGANFYFMYYLSAEEGHLASVRALENMIRHKMRHLKPNYLNRNPRFFMFRNKLLKNYKAAPYENASVLWDIANWWPHENEVYPLYDSSMGQLLETLRREPITRVSNLGRGTQLKLLVRLSHQQKVIFKPQWYPREEVIDGMIYSGKDRHTAEVYAFYLGAVLDFRWTPIVVGRVVNLKKEIYAKGDPELQQTINIETDEDGREKYCLFGKCHYCNEEETVCGDERHNIEGVLIYIVPGTLAKRRSPWQRTYKDDKRAPWEDDMTYCKSLKNKMETIRLLDLIDASIFDYLIQNGDRHHYETREERVVLIDNGKAFGNPNKDHLDILAPLYQCCLLRKSTWDRLQVFSGGVLTEIIDRLSKQDALYPLITDKHKKGVERRLLVVYAVVEHCMDIEGDKMFKTL</sequence>
<name>XYLK_DROME</name>
<organism>
    <name type="scientific">Drosophila melanogaster</name>
    <name type="common">Fruit fly</name>
    <dbReference type="NCBI Taxonomy" id="7227"/>
    <lineage>
        <taxon>Eukaryota</taxon>
        <taxon>Metazoa</taxon>
        <taxon>Ecdysozoa</taxon>
        <taxon>Arthropoda</taxon>
        <taxon>Hexapoda</taxon>
        <taxon>Insecta</taxon>
        <taxon>Pterygota</taxon>
        <taxon>Neoptera</taxon>
        <taxon>Endopterygota</taxon>
        <taxon>Diptera</taxon>
        <taxon>Brachycera</taxon>
        <taxon>Muscomorpha</taxon>
        <taxon>Ephydroidea</taxon>
        <taxon>Drosophilidae</taxon>
        <taxon>Drosophila</taxon>
        <taxon>Sophophora</taxon>
    </lineage>
</organism>
<dbReference type="EC" id="2.7.1.-" evidence="1"/>
<dbReference type="EMBL" id="AE014297">
    <property type="protein sequence ID" value="AAF55106.2"/>
    <property type="molecule type" value="Genomic_DNA"/>
</dbReference>
<dbReference type="EMBL" id="AE014297">
    <property type="protein sequence ID" value="AAN13620.2"/>
    <property type="molecule type" value="Genomic_DNA"/>
</dbReference>
<dbReference type="EMBL" id="AE014297">
    <property type="protein sequence ID" value="AAS65154.1"/>
    <property type="molecule type" value="Genomic_DNA"/>
</dbReference>
<dbReference type="EMBL" id="AY060387">
    <property type="protein sequence ID" value="AAL25426.1"/>
    <property type="molecule type" value="mRNA"/>
</dbReference>
<dbReference type="RefSeq" id="NP_650398.3">
    <property type="nucleotide sequence ID" value="NM_142141.3"/>
</dbReference>
<dbReference type="RefSeq" id="NP_731951.2">
    <property type="nucleotide sequence ID" value="NM_169605.3"/>
</dbReference>
<dbReference type="RefSeq" id="NP_996212.1">
    <property type="nucleotide sequence ID" value="NM_206490.3"/>
</dbReference>
<dbReference type="SMR" id="Q95T10"/>
<dbReference type="FunCoup" id="Q95T10">
    <property type="interactions" value="1576"/>
</dbReference>
<dbReference type="STRING" id="7227.FBpp0082456"/>
<dbReference type="GlyGen" id="Q95T10">
    <property type="glycosylation" value="1 site"/>
</dbReference>
<dbReference type="PaxDb" id="7227-FBpp0113025"/>
<dbReference type="DNASU" id="41797"/>
<dbReference type="EnsemblMetazoa" id="FBtr0082997">
    <property type="protein sequence ID" value="FBpp0082456"/>
    <property type="gene ID" value="FBgn0038268"/>
</dbReference>
<dbReference type="EnsemblMetazoa" id="FBtr0114533">
    <property type="protein sequence ID" value="FBpp0113025"/>
    <property type="gene ID" value="FBgn0038268"/>
</dbReference>
<dbReference type="EnsemblMetazoa" id="FBtr0344378">
    <property type="protein sequence ID" value="FBpp0310751"/>
    <property type="gene ID" value="FBgn0038268"/>
</dbReference>
<dbReference type="GeneID" id="41797"/>
<dbReference type="KEGG" id="dme:Dmel_CG3631"/>
<dbReference type="UCSC" id="CG3631-RC">
    <property type="organism name" value="d. melanogaster"/>
</dbReference>
<dbReference type="AGR" id="FB:FBgn0038268"/>
<dbReference type="FlyBase" id="FBgn0038268">
    <property type="gene designation" value="CG3631"/>
</dbReference>
<dbReference type="VEuPathDB" id="VectorBase:FBgn0038268"/>
<dbReference type="eggNOG" id="KOG3829">
    <property type="taxonomic scope" value="Eukaryota"/>
</dbReference>
<dbReference type="GeneTree" id="ENSGT00950000182951"/>
<dbReference type="HOGENOM" id="CLU_028926_1_1_1"/>
<dbReference type="InParanoid" id="Q95T10"/>
<dbReference type="OMA" id="AVWEDDM"/>
<dbReference type="OrthoDB" id="8583677at2759"/>
<dbReference type="PhylomeDB" id="Q95T10"/>
<dbReference type="BioGRID-ORCS" id="41797">
    <property type="hits" value="0 hits in 1 CRISPR screen"/>
</dbReference>
<dbReference type="GenomeRNAi" id="41797"/>
<dbReference type="PRO" id="PR:Q95T10"/>
<dbReference type="Proteomes" id="UP000000803">
    <property type="component" value="Chromosome 3R"/>
</dbReference>
<dbReference type="Bgee" id="FBgn0038268">
    <property type="expression patterns" value="Expressed in posterior terminal follicle cell in ovary and 85 other cell types or tissues"/>
</dbReference>
<dbReference type="GO" id="GO:0005783">
    <property type="term" value="C:endoplasmic reticulum"/>
    <property type="evidence" value="ECO:0000314"/>
    <property type="project" value="FlyBase"/>
</dbReference>
<dbReference type="GO" id="GO:0005794">
    <property type="term" value="C:Golgi apparatus"/>
    <property type="evidence" value="ECO:0000314"/>
    <property type="project" value="FlyBase"/>
</dbReference>
<dbReference type="GO" id="GO:0005524">
    <property type="term" value="F:ATP binding"/>
    <property type="evidence" value="ECO:0007669"/>
    <property type="project" value="UniProtKB-KW"/>
</dbReference>
<dbReference type="GO" id="GO:0046872">
    <property type="term" value="F:metal ion binding"/>
    <property type="evidence" value="ECO:0007669"/>
    <property type="project" value="UniProtKB-KW"/>
</dbReference>
<dbReference type="GO" id="GO:0016773">
    <property type="term" value="F:phosphotransferase activity, alcohol group as acceptor"/>
    <property type="evidence" value="ECO:0000318"/>
    <property type="project" value="GO_Central"/>
</dbReference>
<dbReference type="GO" id="GO:0004674">
    <property type="term" value="F:protein serine/threonine kinase activity"/>
    <property type="evidence" value="ECO:0000250"/>
    <property type="project" value="FlyBase"/>
</dbReference>
<dbReference type="GO" id="GO:0030166">
    <property type="term" value="P:proteoglycan biosynthetic process"/>
    <property type="evidence" value="ECO:0000318"/>
    <property type="project" value="GO_Central"/>
</dbReference>
<dbReference type="InterPro" id="IPR024869">
    <property type="entry name" value="FAM20"/>
</dbReference>
<dbReference type="InterPro" id="IPR009581">
    <property type="entry name" value="FAM20_C"/>
</dbReference>
<dbReference type="PANTHER" id="PTHR12450">
    <property type="entry name" value="DENTIN MATRIX PROTEIN 4 PROTEIN FAM20"/>
    <property type="match status" value="1"/>
</dbReference>
<dbReference type="PANTHER" id="PTHR12450:SF14">
    <property type="entry name" value="GLYCOSAMINOGLYCAN XYLOSYLKINASE"/>
    <property type="match status" value="1"/>
</dbReference>
<dbReference type="Pfam" id="PF06702">
    <property type="entry name" value="Fam20C"/>
    <property type="match status" value="1"/>
</dbReference>
<keyword id="KW-0067">ATP-binding</keyword>
<keyword id="KW-1015">Disulfide bond</keyword>
<keyword id="KW-0256">Endoplasmic reticulum</keyword>
<keyword id="KW-0325">Glycoprotein</keyword>
<keyword id="KW-0333">Golgi apparatus</keyword>
<keyword id="KW-0418">Kinase</keyword>
<keyword id="KW-0464">Manganese</keyword>
<keyword id="KW-0479">Metal-binding</keyword>
<keyword id="KW-0547">Nucleotide-binding</keyword>
<keyword id="KW-1185">Reference proteome</keyword>
<keyword id="KW-0732">Signal</keyword>
<keyword id="KW-0808">Transferase</keyword>
<gene>
    <name evidence="8" type="ORF">CG3631</name>
</gene>
<reference key="1">
    <citation type="journal article" date="2000" name="Science">
        <title>The genome sequence of Drosophila melanogaster.</title>
        <authorList>
            <person name="Adams M.D."/>
            <person name="Celniker S.E."/>
            <person name="Holt R.A."/>
            <person name="Evans C.A."/>
            <person name="Gocayne J.D."/>
            <person name="Amanatides P.G."/>
            <person name="Scherer S.E."/>
            <person name="Li P.W."/>
            <person name="Hoskins R.A."/>
            <person name="Galle R.F."/>
            <person name="George R.A."/>
            <person name="Lewis S.E."/>
            <person name="Richards S."/>
            <person name="Ashburner M."/>
            <person name="Henderson S.N."/>
            <person name="Sutton G.G."/>
            <person name="Wortman J.R."/>
            <person name="Yandell M.D."/>
            <person name="Zhang Q."/>
            <person name="Chen L.X."/>
            <person name="Brandon R.C."/>
            <person name="Rogers Y.-H.C."/>
            <person name="Blazej R.G."/>
            <person name="Champe M."/>
            <person name="Pfeiffer B.D."/>
            <person name="Wan K.H."/>
            <person name="Doyle C."/>
            <person name="Baxter E.G."/>
            <person name="Helt G."/>
            <person name="Nelson C.R."/>
            <person name="Miklos G.L.G."/>
            <person name="Abril J.F."/>
            <person name="Agbayani A."/>
            <person name="An H.-J."/>
            <person name="Andrews-Pfannkoch C."/>
            <person name="Baldwin D."/>
            <person name="Ballew R.M."/>
            <person name="Basu A."/>
            <person name="Baxendale J."/>
            <person name="Bayraktaroglu L."/>
            <person name="Beasley E.M."/>
            <person name="Beeson K.Y."/>
            <person name="Benos P.V."/>
            <person name="Berman B.P."/>
            <person name="Bhandari D."/>
            <person name="Bolshakov S."/>
            <person name="Borkova D."/>
            <person name="Botchan M.R."/>
            <person name="Bouck J."/>
            <person name="Brokstein P."/>
            <person name="Brottier P."/>
            <person name="Burtis K.C."/>
            <person name="Busam D.A."/>
            <person name="Butler H."/>
            <person name="Cadieu E."/>
            <person name="Center A."/>
            <person name="Chandra I."/>
            <person name="Cherry J.M."/>
            <person name="Cawley S."/>
            <person name="Dahlke C."/>
            <person name="Davenport L.B."/>
            <person name="Davies P."/>
            <person name="de Pablos B."/>
            <person name="Delcher A."/>
            <person name="Deng Z."/>
            <person name="Mays A.D."/>
            <person name="Dew I."/>
            <person name="Dietz S.M."/>
            <person name="Dodson K."/>
            <person name="Doup L.E."/>
            <person name="Downes M."/>
            <person name="Dugan-Rocha S."/>
            <person name="Dunkov B.C."/>
            <person name="Dunn P."/>
            <person name="Durbin K.J."/>
            <person name="Evangelista C.C."/>
            <person name="Ferraz C."/>
            <person name="Ferriera S."/>
            <person name="Fleischmann W."/>
            <person name="Fosler C."/>
            <person name="Gabrielian A.E."/>
            <person name="Garg N.S."/>
            <person name="Gelbart W.M."/>
            <person name="Glasser K."/>
            <person name="Glodek A."/>
            <person name="Gong F."/>
            <person name="Gorrell J.H."/>
            <person name="Gu Z."/>
            <person name="Guan P."/>
            <person name="Harris M."/>
            <person name="Harris N.L."/>
            <person name="Harvey D.A."/>
            <person name="Heiman T.J."/>
            <person name="Hernandez J.R."/>
            <person name="Houck J."/>
            <person name="Hostin D."/>
            <person name="Houston K.A."/>
            <person name="Howland T.J."/>
            <person name="Wei M.-H."/>
            <person name="Ibegwam C."/>
            <person name="Jalali M."/>
            <person name="Kalush F."/>
            <person name="Karpen G.H."/>
            <person name="Ke Z."/>
            <person name="Kennison J.A."/>
            <person name="Ketchum K.A."/>
            <person name="Kimmel B.E."/>
            <person name="Kodira C.D."/>
            <person name="Kraft C.L."/>
            <person name="Kravitz S."/>
            <person name="Kulp D."/>
            <person name="Lai Z."/>
            <person name="Lasko P."/>
            <person name="Lei Y."/>
            <person name="Levitsky A.A."/>
            <person name="Li J.H."/>
            <person name="Li Z."/>
            <person name="Liang Y."/>
            <person name="Lin X."/>
            <person name="Liu X."/>
            <person name="Mattei B."/>
            <person name="McIntosh T.C."/>
            <person name="McLeod M.P."/>
            <person name="McPherson D."/>
            <person name="Merkulov G."/>
            <person name="Milshina N.V."/>
            <person name="Mobarry C."/>
            <person name="Morris J."/>
            <person name="Moshrefi A."/>
            <person name="Mount S.M."/>
            <person name="Moy M."/>
            <person name="Murphy B."/>
            <person name="Murphy L."/>
            <person name="Muzny D.M."/>
            <person name="Nelson D.L."/>
            <person name="Nelson D.R."/>
            <person name="Nelson K.A."/>
            <person name="Nixon K."/>
            <person name="Nusskern D.R."/>
            <person name="Pacleb J.M."/>
            <person name="Palazzolo M."/>
            <person name="Pittman G.S."/>
            <person name="Pan S."/>
            <person name="Pollard J."/>
            <person name="Puri V."/>
            <person name="Reese M.G."/>
            <person name="Reinert K."/>
            <person name="Remington K."/>
            <person name="Saunders R.D.C."/>
            <person name="Scheeler F."/>
            <person name="Shen H."/>
            <person name="Shue B.C."/>
            <person name="Siden-Kiamos I."/>
            <person name="Simpson M."/>
            <person name="Skupski M.P."/>
            <person name="Smith T.J."/>
            <person name="Spier E."/>
            <person name="Spradling A.C."/>
            <person name="Stapleton M."/>
            <person name="Strong R."/>
            <person name="Sun E."/>
            <person name="Svirskas R."/>
            <person name="Tector C."/>
            <person name="Turner R."/>
            <person name="Venter E."/>
            <person name="Wang A.H."/>
            <person name="Wang X."/>
            <person name="Wang Z.-Y."/>
            <person name="Wassarman D.A."/>
            <person name="Weinstock G.M."/>
            <person name="Weissenbach J."/>
            <person name="Williams S.M."/>
            <person name="Woodage T."/>
            <person name="Worley K.C."/>
            <person name="Wu D."/>
            <person name="Yang S."/>
            <person name="Yao Q.A."/>
            <person name="Ye J."/>
            <person name="Yeh R.-F."/>
            <person name="Zaveri J.S."/>
            <person name="Zhan M."/>
            <person name="Zhang G."/>
            <person name="Zhao Q."/>
            <person name="Zheng L."/>
            <person name="Zheng X.H."/>
            <person name="Zhong F.N."/>
            <person name="Zhong W."/>
            <person name="Zhou X."/>
            <person name="Zhu S.C."/>
            <person name="Zhu X."/>
            <person name="Smith H.O."/>
            <person name="Gibbs R.A."/>
            <person name="Myers E.W."/>
            <person name="Rubin G.M."/>
            <person name="Venter J.C."/>
        </authorList>
    </citation>
    <scope>NUCLEOTIDE SEQUENCE [LARGE SCALE GENOMIC DNA]</scope>
    <source>
        <strain>Berkeley</strain>
    </source>
</reference>
<reference key="2">
    <citation type="journal article" date="2002" name="Genome Biol.">
        <title>Annotation of the Drosophila melanogaster euchromatic genome: a systematic review.</title>
        <authorList>
            <person name="Misra S."/>
            <person name="Crosby M.A."/>
            <person name="Mungall C.J."/>
            <person name="Matthews B.B."/>
            <person name="Campbell K.S."/>
            <person name="Hradecky P."/>
            <person name="Huang Y."/>
            <person name="Kaminker J.S."/>
            <person name="Millburn G.H."/>
            <person name="Prochnik S.E."/>
            <person name="Smith C.D."/>
            <person name="Tupy J.L."/>
            <person name="Whitfield E.J."/>
            <person name="Bayraktaroglu L."/>
            <person name="Berman B.P."/>
            <person name="Bettencourt B.R."/>
            <person name="Celniker S.E."/>
            <person name="de Grey A.D.N.J."/>
            <person name="Drysdale R.A."/>
            <person name="Harris N.L."/>
            <person name="Richter J."/>
            <person name="Russo S."/>
            <person name="Schroeder A.J."/>
            <person name="Shu S.Q."/>
            <person name="Stapleton M."/>
            <person name="Yamada C."/>
            <person name="Ashburner M."/>
            <person name="Gelbart W.M."/>
            <person name="Rubin G.M."/>
            <person name="Lewis S.E."/>
        </authorList>
    </citation>
    <scope>GENOME REANNOTATION</scope>
    <source>
        <strain>Berkeley</strain>
    </source>
</reference>
<reference key="3">
    <citation type="journal article" date="2002" name="Genome Biol.">
        <title>A Drosophila full-length cDNA resource.</title>
        <authorList>
            <person name="Stapleton M."/>
            <person name="Carlson J.W."/>
            <person name="Brokstein P."/>
            <person name="Yu C."/>
            <person name="Champe M."/>
            <person name="George R.A."/>
            <person name="Guarin H."/>
            <person name="Kronmiller B."/>
            <person name="Pacleb J.M."/>
            <person name="Park S."/>
            <person name="Wan K.H."/>
            <person name="Rubin G.M."/>
            <person name="Celniker S.E."/>
        </authorList>
    </citation>
    <scope>NUCLEOTIDE SEQUENCE [LARGE SCALE MRNA]</scope>
    <source>
        <strain>Berkeley</strain>
        <tissue>Embryo</tissue>
    </source>
</reference>
<reference key="4">
    <citation type="journal article" date="2012" name="PLoS ONE">
        <title>The Raine syndrome protein FAM20C is a Golgi kinase that phosphorylates bio-mineralization proteins.</title>
        <authorList>
            <person name="Ishikawa H.O."/>
            <person name="Xu A."/>
            <person name="Ogura E."/>
            <person name="Manning G."/>
            <person name="Irvine K.D."/>
        </authorList>
    </citation>
    <scope>SUBCELLULAR LOCATION</scope>
</reference>
<feature type="signal peptide" evidence="4">
    <location>
        <begin position="1"/>
        <end position="21"/>
    </location>
</feature>
<feature type="chain" id="PRO_0000433615" description="Glycosaminoglycan xylosylkinase homolog" evidence="4">
    <location>
        <begin position="22"/>
        <end position="421"/>
    </location>
</feature>
<feature type="active site" evidence="2">
    <location>
        <position position="314"/>
    </location>
</feature>
<feature type="binding site" evidence="3">
    <location>
        <position position="131"/>
    </location>
    <ligand>
        <name>ATP</name>
        <dbReference type="ChEBI" id="CHEBI:30616"/>
    </ligand>
</feature>
<feature type="binding site" evidence="3">
    <location>
        <position position="147"/>
    </location>
    <ligand>
        <name>ATP</name>
        <dbReference type="ChEBI" id="CHEBI:30616"/>
    </ligand>
</feature>
<feature type="binding site" evidence="3">
    <location>
        <position position="166"/>
    </location>
    <ligand>
        <name>Mn(2+)</name>
        <dbReference type="ChEBI" id="CHEBI:29035"/>
    </ligand>
</feature>
<feature type="binding site" evidence="3">
    <location>
        <begin position="252"/>
        <end position="255"/>
    </location>
    <ligand>
        <name>ATP</name>
        <dbReference type="ChEBI" id="CHEBI:30616"/>
    </ligand>
</feature>
<feature type="binding site" evidence="3">
    <location>
        <position position="319"/>
    </location>
    <ligand>
        <name>ATP</name>
        <dbReference type="ChEBI" id="CHEBI:30616"/>
    </ligand>
</feature>
<feature type="binding site" evidence="3">
    <location>
        <position position="329"/>
    </location>
    <ligand>
        <name>ATP</name>
        <dbReference type="ChEBI" id="CHEBI:30616"/>
    </ligand>
</feature>
<feature type="binding site" evidence="3">
    <location>
        <position position="329"/>
    </location>
    <ligand>
        <name>Mn(2+)</name>
        <dbReference type="ChEBI" id="CHEBI:29035"/>
    </ligand>
</feature>
<feature type="glycosylation site" description="N-linked (GlcNAc...) asparagine" evidence="5">
    <location>
        <position position="83"/>
    </location>
</feature>
<feature type="disulfide bond" evidence="3">
    <location>
        <begin position="225"/>
        <end position="240"/>
    </location>
</feature>
<feature type="disulfide bond" evidence="3">
    <location>
        <begin position="230"/>
        <end position="233"/>
    </location>
</feature>
<feature type="disulfide bond" evidence="3">
    <location>
        <begin position="285"/>
        <end position="351"/>
    </location>
</feature>
<feature type="disulfide bond" evidence="3">
    <location>
        <begin position="352"/>
        <end position="409"/>
    </location>
</feature>
<accession>Q95T10</accession>
<protein>
    <recommendedName>
        <fullName evidence="1">Glycosaminoglycan xylosylkinase homolog</fullName>
        <ecNumber evidence="1">2.7.1.-</ecNumber>
    </recommendedName>
    <alternativeName>
        <fullName evidence="1">Xylose kinase homolog</fullName>
    </alternativeName>
</protein>
<comment type="function">
    <text evidence="1">Kylose kinase that mediates the 2-O-phosphorylation of xylose in the glycosaminoglycan-protein linkage region of proteoglycans.</text>
</comment>
<comment type="catalytic activity">
    <reaction evidence="1">
        <text>3-O-(beta-D-galactosyl-(1-&gt;3)-beta-D-galactosyl-(1-&gt;4)-beta-D-xylosyl)-L-seryl-[protein] + ATP = 3-O-(beta-D-galactosyl-(1-&gt;3)-beta-D-galactosyl-(1-&gt;4)-beta-D-2-O-phosphoxylosyl)-L-seryl-[protein] + ADP + H(+)</text>
        <dbReference type="Rhea" id="RHEA:19461"/>
        <dbReference type="Rhea" id="RHEA-COMP:12571"/>
        <dbReference type="Rhea" id="RHEA-COMP:14558"/>
        <dbReference type="ChEBI" id="CHEBI:15378"/>
        <dbReference type="ChEBI" id="CHEBI:30616"/>
        <dbReference type="ChEBI" id="CHEBI:132090"/>
        <dbReference type="ChEBI" id="CHEBI:140494"/>
        <dbReference type="ChEBI" id="CHEBI:456216"/>
    </reaction>
</comment>
<comment type="cofactor">
    <cofactor evidence="3">
        <name>Mn(2+)</name>
        <dbReference type="ChEBI" id="CHEBI:29035"/>
    </cofactor>
</comment>
<comment type="subcellular location">
    <subcellularLocation>
        <location evidence="6">Golgi apparatus</location>
    </subcellularLocation>
    <subcellularLocation>
        <location evidence="6">Endoplasmic reticulum</location>
    </subcellularLocation>
</comment>
<comment type="similarity">
    <text evidence="7">Belongs to the FAM20 family.</text>
</comment>